<reference key="1">
    <citation type="journal article" date="2006" name="Mol. Microbiol.">
        <title>Role of pathogenicity island-associated integrases in the genome plasticity of uropathogenic Escherichia coli strain 536.</title>
        <authorList>
            <person name="Hochhut B."/>
            <person name="Wilde C."/>
            <person name="Balling G."/>
            <person name="Middendorf B."/>
            <person name="Dobrindt U."/>
            <person name="Brzuszkiewicz E."/>
            <person name="Gottschalk G."/>
            <person name="Carniel E."/>
            <person name="Hacker J."/>
        </authorList>
    </citation>
    <scope>NUCLEOTIDE SEQUENCE [LARGE SCALE GENOMIC DNA]</scope>
    <source>
        <strain>536 / UPEC</strain>
    </source>
</reference>
<proteinExistence type="inferred from homology"/>
<organism>
    <name type="scientific">Escherichia coli O6:K15:H31 (strain 536 / UPEC)</name>
    <dbReference type="NCBI Taxonomy" id="362663"/>
    <lineage>
        <taxon>Bacteria</taxon>
        <taxon>Pseudomonadati</taxon>
        <taxon>Pseudomonadota</taxon>
        <taxon>Gammaproteobacteria</taxon>
        <taxon>Enterobacterales</taxon>
        <taxon>Enterobacteriaceae</taxon>
        <taxon>Escherichia</taxon>
    </lineage>
</organism>
<feature type="chain" id="PRO_0000277520" description="UPF0253 protein YaeP">
    <location>
        <begin position="1"/>
        <end position="66"/>
    </location>
</feature>
<comment type="similarity">
    <text evidence="1">Belongs to the UPF0253 family.</text>
</comment>
<accession>Q0TLE3</accession>
<sequence length="66" mass="7214">MEKYCELIRKRYAEIASGDLGYVPDALGCVLKVLNEMAADDALSEAVREKAAYAAANLLVSDYVNE</sequence>
<gene>
    <name evidence="1" type="primary">yaeP</name>
    <name type="ordered locus">ECP_0198</name>
</gene>
<dbReference type="EMBL" id="CP000247">
    <property type="protein sequence ID" value="ABG68238.1"/>
    <property type="molecule type" value="Genomic_DNA"/>
</dbReference>
<dbReference type="RefSeq" id="WP_000417058.1">
    <property type="nucleotide sequence ID" value="NC_008253.1"/>
</dbReference>
<dbReference type="SMR" id="Q0TLE3"/>
<dbReference type="KEGG" id="ecp:ECP_0198"/>
<dbReference type="HOGENOM" id="CLU_190008_0_0_6"/>
<dbReference type="Proteomes" id="UP000009182">
    <property type="component" value="Chromosome"/>
</dbReference>
<dbReference type="HAMAP" id="MF_01064">
    <property type="entry name" value="UPF0253"/>
    <property type="match status" value="1"/>
</dbReference>
<dbReference type="InterPro" id="IPR009624">
    <property type="entry name" value="UPF0253"/>
</dbReference>
<dbReference type="NCBIfam" id="NF003436">
    <property type="entry name" value="PRK04964.1"/>
    <property type="match status" value="1"/>
</dbReference>
<dbReference type="Pfam" id="PF06786">
    <property type="entry name" value="UPF0253"/>
    <property type="match status" value="1"/>
</dbReference>
<protein>
    <recommendedName>
        <fullName evidence="1">UPF0253 protein YaeP</fullName>
    </recommendedName>
</protein>
<evidence type="ECO:0000255" key="1">
    <source>
        <dbReference type="HAMAP-Rule" id="MF_01064"/>
    </source>
</evidence>
<name>YAEP_ECOL5</name>